<feature type="signal peptide" evidence="1">
    <location>
        <begin position="1"/>
        <end position="21"/>
    </location>
</feature>
<feature type="chain" id="PRO_5010101706" description="T cell receptor beta variable 4-2" evidence="1">
    <location>
        <begin position="22"/>
        <end position="114"/>
    </location>
</feature>
<feature type="domain" description="Ig-like" evidence="2">
    <location>
        <begin position="22"/>
        <end position="114" status="greater than"/>
    </location>
</feature>
<feature type="glycosylation site" description="N-linked (GlcNAc...) asparagine" evidence="1">
    <location>
        <position position="76"/>
    </location>
</feature>
<feature type="glycosylation site" description="N-linked (GlcNAc...) asparagine" evidence="1">
    <location>
        <position position="89"/>
    </location>
</feature>
<feature type="disulfide bond" evidence="2">
    <location>
        <begin position="42"/>
        <end position="110"/>
    </location>
</feature>
<feature type="non-terminal residue">
    <location>
        <position position="114"/>
    </location>
</feature>
<protein>
    <recommendedName>
        <fullName evidence="10">T cell receptor beta variable 4-2</fullName>
    </recommendedName>
</protein>
<reference key="1">
    <citation type="journal article" date="1996" name="Science">
        <title>The complete 685-kilobase DNA sequence of the human beta T cell receptor locus.</title>
        <authorList>
            <person name="Rowen L."/>
            <person name="Koop B.F."/>
            <person name="Hood L."/>
        </authorList>
    </citation>
    <scope>NUCLEOTIDE SEQUENCE [GENOMIC DNA] (IMGT ALLELE TRBV4-2*01)</scope>
</reference>
<reference key="2">
    <citation type="submission" date="1997-06" db="EMBL/GenBank/DDBJ databases">
        <title>Sequence determination of the human T cell receptor beta locus: Strategy and error analysis.</title>
        <authorList>
            <person name="Rowen L."/>
            <person name="Seto J."/>
            <person name="Smit A."/>
            <person name="Acharya C."/>
            <person name="Ahearn M.E."/>
            <person name="Ankener M."/>
            <person name="Baskin D."/>
            <person name="Bumgarner R."/>
            <person name="Chen L."/>
            <person name="Chen N."/>
            <person name="Deshpande P."/>
            <person name="Faust J."/>
            <person name="Howard S."/>
            <person name="Jerome N."/>
            <person name="Koop B.F."/>
            <person name="Lee H."/>
            <person name="Loretz C."/>
            <person name="Paeper B."/>
            <person name="Zackrone K."/>
            <person name="Hood L."/>
        </authorList>
    </citation>
    <scope>NUCLEOTIDE SEQUENCE [GENOMIC DNA] (IMGT ALLELE TRBV4-2*01)</scope>
</reference>
<reference key="3">
    <citation type="journal article" date="2003" name="Nature">
        <title>The DNA sequence of human chromosome 7.</title>
        <authorList>
            <person name="Hillier L.W."/>
            <person name="Fulton R.S."/>
            <person name="Fulton L.A."/>
            <person name="Graves T.A."/>
            <person name="Pepin K.H."/>
            <person name="Wagner-McPherson C."/>
            <person name="Layman D."/>
            <person name="Maas J."/>
            <person name="Jaeger S."/>
            <person name="Walker R."/>
            <person name="Wylie K."/>
            <person name="Sekhon M."/>
            <person name="Becker M.C."/>
            <person name="O'Laughlin M.D."/>
            <person name="Schaller M.E."/>
            <person name="Fewell G.A."/>
            <person name="Delehaunty K.D."/>
            <person name="Miner T.L."/>
            <person name="Nash W.E."/>
            <person name="Cordes M."/>
            <person name="Du H."/>
            <person name="Sun H."/>
            <person name="Edwards J."/>
            <person name="Bradshaw-Cordum H."/>
            <person name="Ali J."/>
            <person name="Andrews S."/>
            <person name="Isak A."/>
            <person name="Vanbrunt A."/>
            <person name="Nguyen C."/>
            <person name="Du F."/>
            <person name="Lamar B."/>
            <person name="Courtney L."/>
            <person name="Kalicki J."/>
            <person name="Ozersky P."/>
            <person name="Bielicki L."/>
            <person name="Scott K."/>
            <person name="Holmes A."/>
            <person name="Harkins R."/>
            <person name="Harris A."/>
            <person name="Strong C.M."/>
            <person name="Hou S."/>
            <person name="Tomlinson C."/>
            <person name="Dauphin-Kohlberg S."/>
            <person name="Kozlowicz-Reilly A."/>
            <person name="Leonard S."/>
            <person name="Rohlfing T."/>
            <person name="Rock S.M."/>
            <person name="Tin-Wollam A.-M."/>
            <person name="Abbott A."/>
            <person name="Minx P."/>
            <person name="Maupin R."/>
            <person name="Strowmatt C."/>
            <person name="Latreille P."/>
            <person name="Miller N."/>
            <person name="Johnson D."/>
            <person name="Murray J."/>
            <person name="Woessner J.P."/>
            <person name="Wendl M.C."/>
            <person name="Yang S.-P."/>
            <person name="Schultz B.R."/>
            <person name="Wallis J.W."/>
            <person name="Spieth J."/>
            <person name="Bieri T.A."/>
            <person name="Nelson J.O."/>
            <person name="Berkowicz N."/>
            <person name="Wohldmann P.E."/>
            <person name="Cook L.L."/>
            <person name="Hickenbotham M.T."/>
            <person name="Eldred J."/>
            <person name="Williams D."/>
            <person name="Bedell J.A."/>
            <person name="Mardis E.R."/>
            <person name="Clifton S.W."/>
            <person name="Chissoe S.L."/>
            <person name="Marra M.A."/>
            <person name="Raymond C."/>
            <person name="Haugen E."/>
            <person name="Gillett W."/>
            <person name="Zhou Y."/>
            <person name="James R."/>
            <person name="Phelps K."/>
            <person name="Iadanoto S."/>
            <person name="Bubb K."/>
            <person name="Simms E."/>
            <person name="Levy R."/>
            <person name="Clendenning J."/>
            <person name="Kaul R."/>
            <person name="Kent W.J."/>
            <person name="Furey T.S."/>
            <person name="Baertsch R.A."/>
            <person name="Brent M.R."/>
            <person name="Keibler E."/>
            <person name="Flicek P."/>
            <person name="Bork P."/>
            <person name="Suyama M."/>
            <person name="Bailey J.A."/>
            <person name="Portnoy M.E."/>
            <person name="Torrents D."/>
            <person name="Chinwalla A.T."/>
            <person name="Gish W.R."/>
            <person name="Eddy S.R."/>
            <person name="McPherson J.D."/>
            <person name="Olson M.V."/>
            <person name="Eichler E.E."/>
            <person name="Green E.D."/>
            <person name="Waterston R.H."/>
            <person name="Wilson R.K."/>
        </authorList>
    </citation>
    <scope>NUCLEOTIDE SEQUENCE [LARGE SCALE GENOMIC DNA] (IMGT ALLELE TRBV4-2*01)</scope>
</reference>
<reference key="4">
    <citation type="book" date="2001" name="The T Cell Receptor FactsBook.">
        <title>The T Cell Receptor FactsBook.</title>
        <editorList>
            <person name="Lefranc M.P."/>
            <person name="Lefranc G."/>
        </editorList>
        <authorList>
            <person name="Lefranc M.P."/>
            <person name="Lefranc G."/>
        </authorList>
    </citation>
    <scope>NOMENCLATURE</scope>
</reference>
<reference key="5">
    <citation type="journal article" date="2004" name="Nat. Rev. Immunol.">
        <title>The many important facets of T-cell repertoire diversity.</title>
        <authorList>
            <person name="Nikolich-Zugich J."/>
            <person name="Slifka M.K."/>
            <person name="Messaoudi I."/>
        </authorList>
    </citation>
    <scope>REVIEW ON T CELL REPERTOIRE DIVERSITY</scope>
</reference>
<reference key="6">
    <citation type="journal article" date="2010" name="Cold Spring Harb. Perspect. Biol.">
        <title>Structural biology of the T-cell receptor: insights into receptor assembly, ligand recognition, and initiation of signaling.</title>
        <authorList>
            <person name="Wucherpfennig K.W."/>
            <person name="Gagnon E."/>
            <person name="Call M.J."/>
            <person name="Huseby E.S."/>
            <person name="Call M.E."/>
        </authorList>
    </citation>
    <scope>REVIEW ON T CELL RECEPTOR-CD3 COMPLEX ASSEMBLY</scope>
    <scope>SUBCELLULAR LOCATION</scope>
</reference>
<reference key="7">
    <citation type="journal article" date="2013" name="Nat. Rev. Immunol.">
        <title>T cell receptor signalling networks: branched, diversified and bounded.</title>
        <authorList>
            <person name="Brownlie R.J."/>
            <person name="Zamoyska R."/>
        </authorList>
    </citation>
    <scope>REVIEW ON T CELL RECEPTOR SIGNALING</scope>
</reference>
<reference key="8">
    <citation type="journal article" date="2014" name="Front. Immunol.">
        <title>Immunoglobulin and T Cell Receptor Genes: IMGT((R)) and the Birth and Rise of Immunoinformatics.</title>
        <authorList>
            <person name="Lefranc M.P."/>
        </authorList>
    </citation>
    <scope>NOMENCLATURE</scope>
</reference>
<reference key="9">
    <citation type="journal article" date="2015" name="Annu. Rev. Immunol.">
        <title>T cell antigen receptor recognition of antigen-presenting molecules.</title>
        <authorList>
            <person name="Rossjohn J."/>
            <person name="Gras S."/>
            <person name="Miles J.J."/>
            <person name="Turner S.J."/>
            <person name="Godfrey D.I."/>
            <person name="McCluskey J."/>
        </authorList>
    </citation>
    <scope>REVIEW ON FUNCTION</scope>
</reference>
<keyword id="KW-1064">Adaptive immunity</keyword>
<keyword id="KW-1003">Cell membrane</keyword>
<keyword id="KW-1015">Disulfide bond</keyword>
<keyword id="KW-0325">Glycoprotein</keyword>
<keyword id="KW-0391">Immunity</keyword>
<keyword id="KW-0393">Immunoglobulin domain</keyword>
<keyword id="KW-0472">Membrane</keyword>
<keyword id="KW-1267">Proteomics identification</keyword>
<keyword id="KW-0675">Receptor</keyword>
<keyword id="KW-1185">Reference proteome</keyword>
<keyword id="KW-0732">Signal</keyword>
<keyword id="KW-1279">T cell receptor</keyword>
<accession>A0A539</accession>
<gene>
    <name evidence="10" type="primary">TRBV4-2</name>
    <name evidence="9" type="synonym">TCRBV7S3A2</name>
    <name evidence="8" type="synonym">TCRBV7S3A2T</name>
</gene>
<comment type="function">
    <text evidence="3 5 6 7">V region of the variable domain of T cell receptor (TR) beta chain that participates in the antigen recognition (PubMed:24600447). Alpha-beta T cell receptors are antigen specific receptors which are essential to the immune response and are present on the cell surface of T lymphocytes. Recognize peptide-major histocompatibility (MH) (pMH) complexes that are displayed by antigen presenting cells (APC), a prerequisite for efficient T cell adaptive immunity against pathogens (PubMed:25493333). Binding of alpha-beta TR to pMH complex initiates TR-CD3 clustering on the cell surface and intracellular activation of LCK that phosphorylates the ITAM motifs of CD3G, CD3D, CD3E and CD247 enabling the recruitment of ZAP70. In turn ZAP70 phosphorylates LAT, which recruits numerous signaling molecules to form the LAT signalosome. The LAT signalosome propagates signal branching to three major signaling pathways, the calcium, the mitogen-activated protein kinase (MAPK) kinase and the nuclear factor NF-kappa-B (NF-kB) pathways, leading to the mobilization of transcription factors that are critical for gene expression and essential for T cell growth and differentiation (PubMed:23524462). The T cell repertoire is generated in the thymus, by V-(D)-J rearrangement. This repertoire is then shaped by intrathymic selection events to generate a peripheral T cell pool of self-MH restricted, non-autoaggressive T cells. Post-thymic interaction of alpha-beta TR with the pMH complexes shapes TR structural and functional avidity (PubMed:15040585).</text>
</comment>
<comment type="subunit">
    <text evidence="4">Alpha-beta TR is a heterodimer composed of an alpha and beta chain; disulfide-linked. The alpha-beta TR is associated with the transmembrane signaling CD3 coreceptor proteins to form the TR-CD3 (TcR or TCR). The assembly of alpha-beta TR heterodimers with CD3 occurs in the endoplasmic reticulum where a single alpha-beta TR heterodimer associates with one CD3D-CD3E heterodimer, one CD3G-CD3E heterodimer and one CD247 homodimer forming a stable octameric structure. CD3D-CD3E and CD3G-CD3E heterodimers preferentially associate with TR alpha and TR beta chains, respectively. The association of the CD247 homodimer is the last step of TcR assembly in the endoplasmic reticulum and is required for transport to the cell surface.</text>
</comment>
<comment type="subcellular location">
    <subcellularLocation>
        <location evidence="4">Cell membrane</location>
    </subcellularLocation>
</comment>
<comment type="polymorphism">
    <text evidence="11">There are several alleles. The sequence shown is that of IMGT allele TRBV4-2*01.</text>
</comment>
<organism evidence="12">
    <name type="scientific">Homo sapiens</name>
    <name type="common">Human</name>
    <dbReference type="NCBI Taxonomy" id="9606"/>
    <lineage>
        <taxon>Eukaryota</taxon>
        <taxon>Metazoa</taxon>
        <taxon>Chordata</taxon>
        <taxon>Craniata</taxon>
        <taxon>Vertebrata</taxon>
        <taxon>Euteleostomi</taxon>
        <taxon>Mammalia</taxon>
        <taxon>Eutheria</taxon>
        <taxon>Euarchontoglires</taxon>
        <taxon>Primates</taxon>
        <taxon>Haplorrhini</taxon>
        <taxon>Catarrhini</taxon>
        <taxon>Hominidae</taxon>
        <taxon>Homo</taxon>
    </lineage>
</organism>
<name>TVB42_HUMAN</name>
<evidence type="ECO:0000255" key="1"/>
<evidence type="ECO:0000255" key="2">
    <source>
        <dbReference type="PROSITE-ProRule" id="PRU00114"/>
    </source>
</evidence>
<evidence type="ECO:0000303" key="3">
    <source>
    </source>
</evidence>
<evidence type="ECO:0000303" key="4">
    <source>
    </source>
</evidence>
<evidence type="ECO:0000303" key="5">
    <source>
    </source>
</evidence>
<evidence type="ECO:0000303" key="6">
    <source>
    </source>
</evidence>
<evidence type="ECO:0000303" key="7">
    <source>
    </source>
</evidence>
<evidence type="ECO:0000303" key="8">
    <source>
    </source>
</evidence>
<evidence type="ECO:0000303" key="9">
    <source ref="2"/>
</evidence>
<evidence type="ECO:0000303" key="10">
    <source ref="4"/>
</evidence>
<evidence type="ECO:0000305" key="11"/>
<evidence type="ECO:0000312" key="12">
    <source>
        <dbReference type="EMBL" id="AAC13345.1"/>
    </source>
</evidence>
<proteinExistence type="evidence at protein level"/>
<dbReference type="EMBL" id="L36092">
    <property type="protein sequence ID" value="AAC80201.1"/>
    <property type="molecule type" value="Genomic_DNA"/>
</dbReference>
<dbReference type="EMBL" id="AF009660">
    <property type="protein sequence ID" value="AAC13345.1"/>
    <property type="molecule type" value="Genomic_DNA"/>
</dbReference>
<dbReference type="EMBL" id="AC245088">
    <property type="status" value="NOT_ANNOTATED_CDS"/>
    <property type="molecule type" value="Genomic_DNA"/>
</dbReference>
<dbReference type="SMR" id="A0A539"/>
<dbReference type="FunCoup" id="A0A539">
    <property type="interactions" value="400"/>
</dbReference>
<dbReference type="IMGT_GENE-DB" id="TRBV4-2"/>
<dbReference type="GlyCosmos" id="A0A539">
    <property type="glycosylation" value="2 sites, No reported glycans"/>
</dbReference>
<dbReference type="GlyGen" id="A0A539">
    <property type="glycosylation" value="3 sites, 1 O-linked glycan (1 site)"/>
</dbReference>
<dbReference type="BioMuta" id="TRBV4-2"/>
<dbReference type="MassIVE" id="A0A539"/>
<dbReference type="Ensembl" id="ENST00000390392.3">
    <property type="protein sequence ID" value="ENSP00000374915.3"/>
    <property type="gene ID" value="ENSG00000211745.3"/>
</dbReference>
<dbReference type="Ensembl" id="ENST00000632512.1">
    <property type="protein sequence ID" value="ENSP00000487667.1"/>
    <property type="gene ID" value="ENSG00000282285.1"/>
</dbReference>
<dbReference type="UCSC" id="uc003vxp.6">
    <property type="organism name" value="human"/>
</dbReference>
<dbReference type="AGR" id="HGNC:12216"/>
<dbReference type="GeneCards" id="TRBV4-2"/>
<dbReference type="HGNC" id="HGNC:12216">
    <property type="gene designation" value="TRBV4-2"/>
</dbReference>
<dbReference type="HPA" id="ENSG00000211745">
    <property type="expression patterns" value="Tissue enriched (lymphoid)"/>
</dbReference>
<dbReference type="neXtProt" id="NX_A0A539"/>
<dbReference type="VEuPathDB" id="HostDB:ENSG00000211745"/>
<dbReference type="GeneTree" id="ENSGT00940000162509"/>
<dbReference type="HOGENOM" id="CLU_077975_9_1_1"/>
<dbReference type="InParanoid" id="A0A539"/>
<dbReference type="OMA" id="PELMFAY"/>
<dbReference type="OrthoDB" id="9527848at2759"/>
<dbReference type="PAN-GO" id="A0A539">
    <property type="GO annotations" value="2 GO annotations based on evolutionary models"/>
</dbReference>
<dbReference type="PhylomeDB" id="A0A539"/>
<dbReference type="SignaLink" id="A0A539"/>
<dbReference type="ChiTaRS" id="TRBV4-2">
    <property type="organism name" value="human"/>
</dbReference>
<dbReference type="Pharos" id="A0A539">
    <property type="development level" value="Tdark"/>
</dbReference>
<dbReference type="PRO" id="PR:A0A539"/>
<dbReference type="Proteomes" id="UP000005640">
    <property type="component" value="Chromosome 7"/>
</dbReference>
<dbReference type="RNAct" id="A0A539">
    <property type="molecule type" value="protein"/>
</dbReference>
<dbReference type="Bgee" id="ENSG00000211745">
    <property type="expression patterns" value="Expressed in lymph node and 81 other cell types or tissues"/>
</dbReference>
<dbReference type="GO" id="GO:0005886">
    <property type="term" value="C:plasma membrane"/>
    <property type="evidence" value="ECO:0000318"/>
    <property type="project" value="GO_Central"/>
</dbReference>
<dbReference type="GO" id="GO:0042101">
    <property type="term" value="C:T cell receptor complex"/>
    <property type="evidence" value="ECO:0007669"/>
    <property type="project" value="UniProtKB-KW"/>
</dbReference>
<dbReference type="GO" id="GO:0002250">
    <property type="term" value="P:adaptive immune response"/>
    <property type="evidence" value="ECO:0007669"/>
    <property type="project" value="UniProtKB-KW"/>
</dbReference>
<dbReference type="GO" id="GO:0007166">
    <property type="term" value="P:cell surface receptor signaling pathway"/>
    <property type="evidence" value="ECO:0000318"/>
    <property type="project" value="GO_Central"/>
</dbReference>
<dbReference type="Gene3D" id="2.60.40.10">
    <property type="entry name" value="Immunoglobulins"/>
    <property type="match status" value="1"/>
</dbReference>
<dbReference type="InterPro" id="IPR007110">
    <property type="entry name" value="Ig-like_dom"/>
</dbReference>
<dbReference type="InterPro" id="IPR036179">
    <property type="entry name" value="Ig-like_dom_sf"/>
</dbReference>
<dbReference type="InterPro" id="IPR013783">
    <property type="entry name" value="Ig-like_fold"/>
</dbReference>
<dbReference type="InterPro" id="IPR013106">
    <property type="entry name" value="Ig_V-set"/>
</dbReference>
<dbReference type="InterPro" id="IPR050413">
    <property type="entry name" value="TCR_beta_variable"/>
</dbReference>
<dbReference type="PANTHER" id="PTHR23268:SF122">
    <property type="entry name" value="T CELL RECEPTOR BETA VARIABLE 4-2"/>
    <property type="match status" value="1"/>
</dbReference>
<dbReference type="PANTHER" id="PTHR23268">
    <property type="entry name" value="T-CELL RECEPTOR BETA CHAIN"/>
    <property type="match status" value="1"/>
</dbReference>
<dbReference type="Pfam" id="PF07686">
    <property type="entry name" value="V-set"/>
    <property type="match status" value="1"/>
</dbReference>
<dbReference type="SMART" id="SM00406">
    <property type="entry name" value="IGv"/>
    <property type="match status" value="1"/>
</dbReference>
<dbReference type="SUPFAM" id="SSF48726">
    <property type="entry name" value="Immunoglobulin"/>
    <property type="match status" value="1"/>
</dbReference>
<dbReference type="PROSITE" id="PS50835">
    <property type="entry name" value="IG_LIKE"/>
    <property type="match status" value="1"/>
</dbReference>
<sequence length="114" mass="12890">MGCRLLCCAVLCLLGAVPMETGVTQTPRHLVMGMTNKKSLKCEQHLGHNAMYWYKQSAKKPLELMFVYNFKEQTENNSVPSRFSPECPNSSHLFLHLHTLQPEDSALYLCASSQ</sequence>